<comment type="function">
    <text evidence="1">Na(+)/H(+) antiporter that extrudes sodium in exchange for external protons.</text>
</comment>
<comment type="catalytic activity">
    <reaction evidence="1">
        <text>Na(+)(in) + 2 H(+)(out) = Na(+)(out) + 2 H(+)(in)</text>
        <dbReference type="Rhea" id="RHEA:29251"/>
        <dbReference type="ChEBI" id="CHEBI:15378"/>
        <dbReference type="ChEBI" id="CHEBI:29101"/>
    </reaction>
    <physiologicalReaction direction="left-to-right" evidence="1">
        <dbReference type="Rhea" id="RHEA:29252"/>
    </physiologicalReaction>
</comment>
<comment type="subcellular location">
    <subcellularLocation>
        <location evidence="1">Cell inner membrane</location>
        <topology evidence="1">Multi-pass membrane protein</topology>
    </subcellularLocation>
</comment>
<comment type="similarity">
    <text evidence="1">Belongs to the NhaA Na(+)/H(+) (TC 2.A.33) antiporter family.</text>
</comment>
<feature type="chain" id="PRO_0000334235" description="Na(+)/H(+) antiporter NhaA">
    <location>
        <begin position="1"/>
        <end position="452"/>
    </location>
</feature>
<feature type="transmembrane region" description="Helical" evidence="1">
    <location>
        <begin position="27"/>
        <end position="47"/>
    </location>
</feature>
<feature type="transmembrane region" description="Helical" evidence="1">
    <location>
        <begin position="78"/>
        <end position="98"/>
    </location>
</feature>
<feature type="transmembrane region" description="Helical" evidence="1">
    <location>
        <begin position="114"/>
        <end position="134"/>
    </location>
</feature>
<feature type="transmembrane region" description="Helical" evidence="1">
    <location>
        <begin position="141"/>
        <end position="161"/>
    </location>
</feature>
<feature type="transmembrane region" description="Helical" evidence="1">
    <location>
        <begin position="172"/>
        <end position="192"/>
    </location>
</feature>
<feature type="transmembrane region" description="Helical" evidence="1">
    <location>
        <begin position="201"/>
        <end position="221"/>
    </location>
</feature>
<feature type="transmembrane region" description="Helical" evidence="1">
    <location>
        <begin position="222"/>
        <end position="242"/>
    </location>
</feature>
<feature type="transmembrane region" description="Helical" evidence="1">
    <location>
        <begin position="316"/>
        <end position="336"/>
    </location>
</feature>
<feature type="transmembrane region" description="Helical" evidence="1">
    <location>
        <begin position="346"/>
        <end position="366"/>
    </location>
</feature>
<feature type="transmembrane region" description="Helical" evidence="1">
    <location>
        <begin position="388"/>
        <end position="408"/>
    </location>
</feature>
<feature type="transmembrane region" description="Helical" evidence="1">
    <location>
        <begin position="421"/>
        <end position="441"/>
    </location>
</feature>
<organism>
    <name type="scientific">Bartonella bacilliformis (strain ATCC 35685 / KC583 / Herrer 020/F12,63)</name>
    <dbReference type="NCBI Taxonomy" id="360095"/>
    <lineage>
        <taxon>Bacteria</taxon>
        <taxon>Pseudomonadati</taxon>
        <taxon>Pseudomonadota</taxon>
        <taxon>Alphaproteobacteria</taxon>
        <taxon>Hyphomicrobiales</taxon>
        <taxon>Bartonellaceae</taxon>
        <taxon>Bartonella</taxon>
    </lineage>
</organism>
<dbReference type="EMBL" id="CP000524">
    <property type="protein sequence ID" value="ABM44900.1"/>
    <property type="molecule type" value="Genomic_DNA"/>
</dbReference>
<dbReference type="RefSeq" id="WP_005766355.1">
    <property type="nucleotide sequence ID" value="NC_008783.1"/>
</dbReference>
<dbReference type="SMR" id="A1URT7"/>
<dbReference type="STRING" id="360095.BARBAKC583_0371"/>
<dbReference type="GeneID" id="4684153"/>
<dbReference type="KEGG" id="bbk:BARBAKC583_0371"/>
<dbReference type="PATRIC" id="fig|360095.6.peg.354"/>
<dbReference type="eggNOG" id="COG3004">
    <property type="taxonomic scope" value="Bacteria"/>
</dbReference>
<dbReference type="HOGENOM" id="CLU_015803_1_2_5"/>
<dbReference type="OrthoDB" id="9808135at2"/>
<dbReference type="Proteomes" id="UP000000643">
    <property type="component" value="Chromosome"/>
</dbReference>
<dbReference type="GO" id="GO:0005886">
    <property type="term" value="C:plasma membrane"/>
    <property type="evidence" value="ECO:0007669"/>
    <property type="project" value="UniProtKB-SubCell"/>
</dbReference>
<dbReference type="GO" id="GO:0015385">
    <property type="term" value="F:sodium:proton antiporter activity"/>
    <property type="evidence" value="ECO:0007669"/>
    <property type="project" value="TreeGrafter"/>
</dbReference>
<dbReference type="GO" id="GO:0006885">
    <property type="term" value="P:regulation of pH"/>
    <property type="evidence" value="ECO:0007669"/>
    <property type="project" value="InterPro"/>
</dbReference>
<dbReference type="Gene3D" id="1.20.1530.10">
    <property type="entry name" value="Na+/H+ antiporter like domain"/>
    <property type="match status" value="1"/>
</dbReference>
<dbReference type="HAMAP" id="MF_01844">
    <property type="entry name" value="NhaA"/>
    <property type="match status" value="1"/>
</dbReference>
<dbReference type="InterPro" id="IPR023171">
    <property type="entry name" value="Na/H_antiporter_dom_sf"/>
</dbReference>
<dbReference type="InterPro" id="IPR004670">
    <property type="entry name" value="NhaA"/>
</dbReference>
<dbReference type="NCBIfam" id="TIGR00773">
    <property type="entry name" value="NhaA"/>
    <property type="match status" value="1"/>
</dbReference>
<dbReference type="PANTHER" id="PTHR30341:SF0">
    <property type="entry name" value="NA(+)_H(+) ANTIPORTER NHAA"/>
    <property type="match status" value="1"/>
</dbReference>
<dbReference type="PANTHER" id="PTHR30341">
    <property type="entry name" value="SODIUM ION/PROTON ANTIPORTER NHAA-RELATED"/>
    <property type="match status" value="1"/>
</dbReference>
<dbReference type="Pfam" id="PF06965">
    <property type="entry name" value="Na_H_antiport_1"/>
    <property type="match status" value="1"/>
</dbReference>
<gene>
    <name evidence="1" type="primary">nhaA</name>
    <name type="ordered locus">BARBAKC583_0371</name>
</gene>
<proteinExistence type="inferred from homology"/>
<accession>A1URT7</accession>
<keyword id="KW-0050">Antiport</keyword>
<keyword id="KW-0997">Cell inner membrane</keyword>
<keyword id="KW-1003">Cell membrane</keyword>
<keyword id="KW-0406">Ion transport</keyword>
<keyword id="KW-0472">Membrane</keyword>
<keyword id="KW-0915">Sodium</keyword>
<keyword id="KW-0739">Sodium transport</keyword>
<keyword id="KW-0812">Transmembrane</keyword>
<keyword id="KW-1133">Transmembrane helix</keyword>
<keyword id="KW-0813">Transport</keyword>
<protein>
    <recommendedName>
        <fullName evidence="1">Na(+)/H(+) antiporter NhaA</fullName>
    </recommendedName>
    <alternativeName>
        <fullName evidence="1">Sodium/proton antiporter NhaA</fullName>
    </alternativeName>
</protein>
<evidence type="ECO:0000255" key="1">
    <source>
        <dbReference type="HAMAP-Rule" id="MF_01844"/>
    </source>
</evidence>
<name>NHAA_BARBK</name>
<sequence length="452" mass="48873">MLDLSSNRLPNRASLITNRAFSAIERFLHIEAMSGVVLLLAAATALILANSQYTSLYEAFWHTPLGFNFGHFNLSWDLHFWVNDVLMTIFFLVAGMEIRREIHEGALASVKQAILPIVAAIGGVCIPAIIYLSFNFNGGHIYGWAVPTATDIAFALGILALLGKAIPSNLHIILLSLAIIDDIMAVLIIAFFYSTNLDPSGLAIAAAGIALVFFFQWISFASAWLYVLPGAIIWWGLMVTGIHPSLAGVILGMMTPVFPTRNLVSPLTTLSNAIQTLQEKNTNTDLHHISTTLKKMRKGQRDIVAPVIRIQKELHPWVAYGVMPIFAFANAGVSFANFDLASQKSFLIVLGIIIGLCIGKPLGILAASYLAVKSGLCRLPPHVTWTGILLIGFLAGIGFTMSIFVSMLAFQDIAQLNSAKIGVLCGSGLSALAGLGYGLIYIKNNKKTHNKP</sequence>
<reference key="1">
    <citation type="submission" date="2006-12" db="EMBL/GenBank/DDBJ databases">
        <authorList>
            <person name="Hendrix L."/>
            <person name="Mohamoud Y."/>
            <person name="Radune D."/>
            <person name="Shvartsbeyn A."/>
            <person name="Daugherty S."/>
            <person name="Dodson R."/>
            <person name="Durkin A.S."/>
            <person name="Harkins D."/>
            <person name="Huot H."/>
            <person name="Kothari S.P."/>
            <person name="Madupu R."/>
            <person name="Li J."/>
            <person name="Nelson W.C."/>
            <person name="Shrivastava S."/>
            <person name="Giglio M.G."/>
            <person name="Haft D."/>
            <person name="Selengut J."/>
            <person name="Fraser-Ligget C."/>
            <person name="Seshadri R."/>
        </authorList>
    </citation>
    <scope>NUCLEOTIDE SEQUENCE [LARGE SCALE GENOMIC DNA]</scope>
    <source>
        <strain>ATCC 35685 / KC583 / Herrer 020/F12,63</strain>
    </source>
</reference>